<keyword id="KW-0963">Cytoplasm</keyword>
<keyword id="KW-0227">DNA damage</keyword>
<keyword id="KW-0233">DNA recombination</keyword>
<keyword id="KW-0234">DNA repair</keyword>
<keyword id="KW-0238">DNA-binding</keyword>
<keyword id="KW-1185">Reference proteome</keyword>
<accession>A3MZ05</accession>
<feature type="chain" id="PRO_1000002386" description="Holliday junction branch migration complex subunit RuvA">
    <location>
        <begin position="1"/>
        <end position="201"/>
    </location>
</feature>
<feature type="region of interest" description="Domain I" evidence="1">
    <location>
        <begin position="1"/>
        <end position="64"/>
    </location>
</feature>
<feature type="region of interest" description="Domain II" evidence="1">
    <location>
        <begin position="65"/>
        <end position="143"/>
    </location>
</feature>
<feature type="region of interest" description="Flexible linker" evidence="1">
    <location>
        <begin position="144"/>
        <end position="154"/>
    </location>
</feature>
<feature type="region of interest" description="Domain III" evidence="1">
    <location>
        <begin position="154"/>
        <end position="201"/>
    </location>
</feature>
<protein>
    <recommendedName>
        <fullName evidence="1">Holliday junction branch migration complex subunit RuvA</fullName>
    </recommendedName>
</protein>
<evidence type="ECO:0000255" key="1">
    <source>
        <dbReference type="HAMAP-Rule" id="MF_00031"/>
    </source>
</evidence>
<dbReference type="EMBL" id="CP000569">
    <property type="protein sequence ID" value="ABN73391.1"/>
    <property type="molecule type" value="Genomic_DNA"/>
</dbReference>
<dbReference type="RefSeq" id="WP_005600357.1">
    <property type="nucleotide sequence ID" value="NC_009053.1"/>
</dbReference>
<dbReference type="SMR" id="A3MZ05"/>
<dbReference type="STRING" id="416269.APL_0283"/>
<dbReference type="EnsemblBacteria" id="ABN73391">
    <property type="protein sequence ID" value="ABN73391"/>
    <property type="gene ID" value="APL_0283"/>
</dbReference>
<dbReference type="KEGG" id="apl:APL_0283"/>
<dbReference type="eggNOG" id="COG0632">
    <property type="taxonomic scope" value="Bacteria"/>
</dbReference>
<dbReference type="HOGENOM" id="CLU_087936_0_0_6"/>
<dbReference type="Proteomes" id="UP000001432">
    <property type="component" value="Chromosome"/>
</dbReference>
<dbReference type="GO" id="GO:0005737">
    <property type="term" value="C:cytoplasm"/>
    <property type="evidence" value="ECO:0007669"/>
    <property type="project" value="UniProtKB-SubCell"/>
</dbReference>
<dbReference type="GO" id="GO:0009379">
    <property type="term" value="C:Holliday junction helicase complex"/>
    <property type="evidence" value="ECO:0007669"/>
    <property type="project" value="InterPro"/>
</dbReference>
<dbReference type="GO" id="GO:0048476">
    <property type="term" value="C:Holliday junction resolvase complex"/>
    <property type="evidence" value="ECO:0007669"/>
    <property type="project" value="UniProtKB-UniRule"/>
</dbReference>
<dbReference type="GO" id="GO:0005524">
    <property type="term" value="F:ATP binding"/>
    <property type="evidence" value="ECO:0007669"/>
    <property type="project" value="InterPro"/>
</dbReference>
<dbReference type="GO" id="GO:0000400">
    <property type="term" value="F:four-way junction DNA binding"/>
    <property type="evidence" value="ECO:0007669"/>
    <property type="project" value="UniProtKB-UniRule"/>
</dbReference>
<dbReference type="GO" id="GO:0009378">
    <property type="term" value="F:four-way junction helicase activity"/>
    <property type="evidence" value="ECO:0007669"/>
    <property type="project" value="InterPro"/>
</dbReference>
<dbReference type="GO" id="GO:0006310">
    <property type="term" value="P:DNA recombination"/>
    <property type="evidence" value="ECO:0007669"/>
    <property type="project" value="UniProtKB-UniRule"/>
</dbReference>
<dbReference type="GO" id="GO:0006281">
    <property type="term" value="P:DNA repair"/>
    <property type="evidence" value="ECO:0007669"/>
    <property type="project" value="UniProtKB-UniRule"/>
</dbReference>
<dbReference type="CDD" id="cd14332">
    <property type="entry name" value="UBA_RuvA_C"/>
    <property type="match status" value="1"/>
</dbReference>
<dbReference type="FunFam" id="2.40.50.140:FF:000083">
    <property type="entry name" value="Holliday junction ATP-dependent DNA helicase RuvA"/>
    <property type="match status" value="1"/>
</dbReference>
<dbReference type="Gene3D" id="1.10.150.20">
    <property type="entry name" value="5' to 3' exonuclease, C-terminal subdomain"/>
    <property type="match status" value="1"/>
</dbReference>
<dbReference type="Gene3D" id="1.10.8.10">
    <property type="entry name" value="DNA helicase RuvA subunit, C-terminal domain"/>
    <property type="match status" value="1"/>
</dbReference>
<dbReference type="Gene3D" id="2.40.50.140">
    <property type="entry name" value="Nucleic acid-binding proteins"/>
    <property type="match status" value="1"/>
</dbReference>
<dbReference type="HAMAP" id="MF_00031">
    <property type="entry name" value="DNA_HJ_migration_RuvA"/>
    <property type="match status" value="1"/>
</dbReference>
<dbReference type="InterPro" id="IPR013849">
    <property type="entry name" value="DNA_helicase_Holl-junc_RuvA_I"/>
</dbReference>
<dbReference type="InterPro" id="IPR003583">
    <property type="entry name" value="Hlx-hairpin-Hlx_DNA-bd_motif"/>
</dbReference>
<dbReference type="InterPro" id="IPR012340">
    <property type="entry name" value="NA-bd_OB-fold"/>
</dbReference>
<dbReference type="InterPro" id="IPR000085">
    <property type="entry name" value="RuvA"/>
</dbReference>
<dbReference type="InterPro" id="IPR010994">
    <property type="entry name" value="RuvA_2-like"/>
</dbReference>
<dbReference type="InterPro" id="IPR011114">
    <property type="entry name" value="RuvA_C"/>
</dbReference>
<dbReference type="InterPro" id="IPR036267">
    <property type="entry name" value="RuvA_C_sf"/>
</dbReference>
<dbReference type="NCBIfam" id="TIGR00084">
    <property type="entry name" value="ruvA"/>
    <property type="match status" value="1"/>
</dbReference>
<dbReference type="Pfam" id="PF14520">
    <property type="entry name" value="HHH_5"/>
    <property type="match status" value="1"/>
</dbReference>
<dbReference type="Pfam" id="PF07499">
    <property type="entry name" value="RuvA_C"/>
    <property type="match status" value="1"/>
</dbReference>
<dbReference type="Pfam" id="PF01330">
    <property type="entry name" value="RuvA_N"/>
    <property type="match status" value="1"/>
</dbReference>
<dbReference type="SMART" id="SM00278">
    <property type="entry name" value="HhH1"/>
    <property type="match status" value="2"/>
</dbReference>
<dbReference type="SUPFAM" id="SSF46929">
    <property type="entry name" value="DNA helicase RuvA subunit, C-terminal domain"/>
    <property type="match status" value="1"/>
</dbReference>
<dbReference type="SUPFAM" id="SSF50249">
    <property type="entry name" value="Nucleic acid-binding proteins"/>
    <property type="match status" value="1"/>
</dbReference>
<dbReference type="SUPFAM" id="SSF47781">
    <property type="entry name" value="RuvA domain 2-like"/>
    <property type="match status" value="1"/>
</dbReference>
<gene>
    <name evidence="1" type="primary">ruvA</name>
    <name type="ordered locus">APL_0283</name>
</gene>
<reference key="1">
    <citation type="journal article" date="2008" name="J. Bacteriol.">
        <title>The complete genome sequence of Actinobacillus pleuropneumoniae L20 (serotype 5b).</title>
        <authorList>
            <person name="Foote S.J."/>
            <person name="Bosse J.T."/>
            <person name="Bouevitch A.B."/>
            <person name="Langford P.R."/>
            <person name="Young N.M."/>
            <person name="Nash J.H.E."/>
        </authorList>
    </citation>
    <scope>NUCLEOTIDE SEQUENCE [LARGE SCALE GENOMIC DNA]</scope>
    <source>
        <strain>L20</strain>
    </source>
</reference>
<proteinExistence type="inferred from homology"/>
<sequence length="201" mass="22066">MIGRLHGKIIEKQPPEMVIDVQGVGYEVLLPMTSFYSLPQVGEEATIFTHLVVREDAHLLFGFAQKQDRTLFRELIKTNGVGPKLALAILSAMSVSQFANAVENEELAKLTKIPGIGRKTAERLLVELKGKFKGVAQSDFFEEHSVETIVATHSHDPADEARDALVALGYKLADAEKMIKKVNKAGATSEQLIREALKASL</sequence>
<organism>
    <name type="scientific">Actinobacillus pleuropneumoniae serotype 5b (strain L20)</name>
    <dbReference type="NCBI Taxonomy" id="416269"/>
    <lineage>
        <taxon>Bacteria</taxon>
        <taxon>Pseudomonadati</taxon>
        <taxon>Pseudomonadota</taxon>
        <taxon>Gammaproteobacteria</taxon>
        <taxon>Pasteurellales</taxon>
        <taxon>Pasteurellaceae</taxon>
        <taxon>Actinobacillus</taxon>
    </lineage>
</organism>
<comment type="function">
    <text evidence="1">The RuvA-RuvB-RuvC complex processes Holliday junction (HJ) DNA during genetic recombination and DNA repair, while the RuvA-RuvB complex plays an important role in the rescue of blocked DNA replication forks via replication fork reversal (RFR). RuvA specifically binds to HJ cruciform DNA, conferring on it an open structure. The RuvB hexamer acts as an ATP-dependent pump, pulling dsDNA into and through the RuvAB complex. HJ branch migration allows RuvC to scan DNA until it finds its consensus sequence, where it cleaves and resolves the cruciform DNA.</text>
</comment>
<comment type="subunit">
    <text evidence="1">Homotetramer. Forms an RuvA(8)-RuvB(12)-Holliday junction (HJ) complex. HJ DNA is sandwiched between 2 RuvA tetramers; dsDNA enters through RuvA and exits via RuvB. An RuvB hexamer assembles on each DNA strand where it exits the tetramer. Each RuvB hexamer is contacted by two RuvA subunits (via domain III) on 2 adjacent RuvB subunits; this complex drives branch migration. In the full resolvosome a probable DNA-RuvA(4)-RuvB(12)-RuvC(2) complex forms which resolves the HJ.</text>
</comment>
<comment type="subcellular location">
    <subcellularLocation>
        <location evidence="1">Cytoplasm</location>
    </subcellularLocation>
</comment>
<comment type="domain">
    <text evidence="1">Has three domains with a flexible linker between the domains II and III and assumes an 'L' shape. Domain III is highly mobile and contacts RuvB.</text>
</comment>
<comment type="similarity">
    <text evidence="1">Belongs to the RuvA family.</text>
</comment>
<name>RUVA_ACTP2</name>